<organism>
    <name type="scientific">Yersinia pestis bv. Antiqua (strain Antiqua)</name>
    <dbReference type="NCBI Taxonomy" id="360102"/>
    <lineage>
        <taxon>Bacteria</taxon>
        <taxon>Pseudomonadati</taxon>
        <taxon>Pseudomonadota</taxon>
        <taxon>Gammaproteobacteria</taxon>
        <taxon>Enterobacterales</taxon>
        <taxon>Yersiniaceae</taxon>
        <taxon>Yersinia</taxon>
    </lineage>
</organism>
<accession>Q1C854</accession>
<keyword id="KW-0963">Cytoplasm</keyword>
<keyword id="KW-0488">Methylation</keyword>
<keyword id="KW-0648">Protein biosynthesis</keyword>
<proteinExistence type="inferred from homology"/>
<name>RF1_YERPA</name>
<gene>
    <name evidence="1" type="primary">prfA</name>
    <name type="ordered locus">YPA_1401</name>
</gene>
<comment type="function">
    <text evidence="1">Peptide chain release factor 1 directs the termination of translation in response to the peptide chain termination codons UAG and UAA.</text>
</comment>
<comment type="subcellular location">
    <subcellularLocation>
        <location evidence="1">Cytoplasm</location>
    </subcellularLocation>
</comment>
<comment type="PTM">
    <text evidence="1">Methylated by PrmC. Methylation increases the termination efficiency of RF1.</text>
</comment>
<comment type="similarity">
    <text evidence="1">Belongs to the prokaryotic/mitochondrial release factor family.</text>
</comment>
<dbReference type="EMBL" id="CP000308">
    <property type="protein sequence ID" value="ABG13368.1"/>
    <property type="molecule type" value="Genomic_DNA"/>
</dbReference>
<dbReference type="RefSeq" id="WP_002211236.1">
    <property type="nucleotide sequence ID" value="NZ_CP009906.1"/>
</dbReference>
<dbReference type="SMR" id="Q1C854"/>
<dbReference type="GeneID" id="57976644"/>
<dbReference type="KEGG" id="ypa:YPA_1401"/>
<dbReference type="Proteomes" id="UP000001971">
    <property type="component" value="Chromosome"/>
</dbReference>
<dbReference type="GO" id="GO:0005737">
    <property type="term" value="C:cytoplasm"/>
    <property type="evidence" value="ECO:0007669"/>
    <property type="project" value="UniProtKB-SubCell"/>
</dbReference>
<dbReference type="GO" id="GO:0016149">
    <property type="term" value="F:translation release factor activity, codon specific"/>
    <property type="evidence" value="ECO:0007669"/>
    <property type="project" value="UniProtKB-UniRule"/>
</dbReference>
<dbReference type="FunFam" id="3.30.160.20:FF:000004">
    <property type="entry name" value="Peptide chain release factor 1"/>
    <property type="match status" value="1"/>
</dbReference>
<dbReference type="FunFam" id="3.30.70.1660:FF:000002">
    <property type="entry name" value="Peptide chain release factor 1"/>
    <property type="match status" value="1"/>
</dbReference>
<dbReference type="FunFam" id="3.30.70.1660:FF:000004">
    <property type="entry name" value="Peptide chain release factor 1"/>
    <property type="match status" value="1"/>
</dbReference>
<dbReference type="Gene3D" id="3.30.160.20">
    <property type="match status" value="1"/>
</dbReference>
<dbReference type="Gene3D" id="3.30.70.1660">
    <property type="match status" value="1"/>
</dbReference>
<dbReference type="Gene3D" id="6.10.140.1950">
    <property type="match status" value="1"/>
</dbReference>
<dbReference type="HAMAP" id="MF_00093">
    <property type="entry name" value="Rel_fac_1"/>
    <property type="match status" value="1"/>
</dbReference>
<dbReference type="InterPro" id="IPR005139">
    <property type="entry name" value="PCRF"/>
</dbReference>
<dbReference type="InterPro" id="IPR000352">
    <property type="entry name" value="Pep_chain_release_fac_I"/>
</dbReference>
<dbReference type="InterPro" id="IPR045853">
    <property type="entry name" value="Pep_chain_release_fac_I_sf"/>
</dbReference>
<dbReference type="InterPro" id="IPR050057">
    <property type="entry name" value="Prokaryotic/Mito_RF"/>
</dbReference>
<dbReference type="InterPro" id="IPR004373">
    <property type="entry name" value="RF-1"/>
</dbReference>
<dbReference type="NCBIfam" id="TIGR00019">
    <property type="entry name" value="prfA"/>
    <property type="match status" value="1"/>
</dbReference>
<dbReference type="NCBIfam" id="NF001859">
    <property type="entry name" value="PRK00591.1"/>
    <property type="match status" value="1"/>
</dbReference>
<dbReference type="PANTHER" id="PTHR43804">
    <property type="entry name" value="LD18447P"/>
    <property type="match status" value="1"/>
</dbReference>
<dbReference type="PANTHER" id="PTHR43804:SF7">
    <property type="entry name" value="LD18447P"/>
    <property type="match status" value="1"/>
</dbReference>
<dbReference type="Pfam" id="PF03462">
    <property type="entry name" value="PCRF"/>
    <property type="match status" value="1"/>
</dbReference>
<dbReference type="Pfam" id="PF00472">
    <property type="entry name" value="RF-1"/>
    <property type="match status" value="1"/>
</dbReference>
<dbReference type="SMART" id="SM00937">
    <property type="entry name" value="PCRF"/>
    <property type="match status" value="1"/>
</dbReference>
<dbReference type="SUPFAM" id="SSF75620">
    <property type="entry name" value="Release factor"/>
    <property type="match status" value="1"/>
</dbReference>
<dbReference type="PROSITE" id="PS00745">
    <property type="entry name" value="RF_PROK_I"/>
    <property type="match status" value="1"/>
</dbReference>
<protein>
    <recommendedName>
        <fullName evidence="1">Peptide chain release factor 1</fullName>
        <shortName evidence="1">RF-1</shortName>
    </recommendedName>
</protein>
<feature type="chain" id="PRO_0000263395" description="Peptide chain release factor 1">
    <location>
        <begin position="1"/>
        <end position="360"/>
    </location>
</feature>
<feature type="region of interest" description="Disordered" evidence="2">
    <location>
        <begin position="291"/>
        <end position="312"/>
    </location>
</feature>
<feature type="compositionally biased region" description="Basic and acidic residues" evidence="2">
    <location>
        <begin position="291"/>
        <end position="308"/>
    </location>
</feature>
<feature type="modified residue" description="N5-methylglutamine" evidence="1">
    <location>
        <position position="235"/>
    </location>
</feature>
<reference key="1">
    <citation type="journal article" date="2006" name="J. Bacteriol.">
        <title>Complete genome sequence of Yersinia pestis strains Antiqua and Nepal516: evidence of gene reduction in an emerging pathogen.</title>
        <authorList>
            <person name="Chain P.S.G."/>
            <person name="Hu P."/>
            <person name="Malfatti S.A."/>
            <person name="Radnedge L."/>
            <person name="Larimer F."/>
            <person name="Vergez L.M."/>
            <person name="Worsham P."/>
            <person name="Chu M.C."/>
            <person name="Andersen G.L."/>
        </authorList>
    </citation>
    <scope>NUCLEOTIDE SEQUENCE [LARGE SCALE GENOMIC DNA]</scope>
    <source>
        <strain>Antiqua</strain>
    </source>
</reference>
<evidence type="ECO:0000255" key="1">
    <source>
        <dbReference type="HAMAP-Rule" id="MF_00093"/>
    </source>
</evidence>
<evidence type="ECO:0000256" key="2">
    <source>
        <dbReference type="SAM" id="MobiDB-lite"/>
    </source>
</evidence>
<sequence>MKSSIVAKLEALQERHEEVLAYLGDASVIADQDRFRALSREYAQLTDVTRCFKEWRSAQDDIEAAEMMLDDLEMREMAQEELKIAKARSEELEQQLQVLLLPKDPDDERDCFLEIRAGTGGDEAAIFAGDMFRMYSRYAETRRWKVEIMSASEGEHGGYKEIIAKISGDGVFGQLKFESGGHRVQRVPETESQGRIHTSACTVAVMPAIPEAELPEINAGDLRIDTFRSSGAGGQHVNTTDSAIRITHIPTGIVVECQDERSQHKNKAKAMSVLGARIRAAEMQKRQLAEASERRNLLGTGDRSDRNRTYNFPQGRVTDHRINLTLYRLDEVMEGKLDMLIQPIVQEYQADQLSALSEQD</sequence>